<gene>
    <name type="ORF">OsI_025465</name>
</gene>
<sequence>MAQAMASMTGLSQGVQLPAGPRRAGGRSRLAVVRADAAAADVQTGRRAVLGLVATGIAGGALAQAALAEAAKPIKLGPPPPPSGGLPGTLNSDQARDTDLPLRERFYLQPLPPAEAAARAKESAQDIINLKPLIEKKQWPFVRDDLRLRASYLRYDLKTVINSKPKDEKKGLKDLTGKLFATIDGLDHAAKIKSPEEAEKYYTLTKSALGDVLAKLG</sequence>
<reference key="1">
    <citation type="journal article" date="2005" name="PLoS Biol.">
        <title>The genomes of Oryza sativa: a history of duplications.</title>
        <authorList>
            <person name="Yu J."/>
            <person name="Wang J."/>
            <person name="Lin W."/>
            <person name="Li S."/>
            <person name="Li H."/>
            <person name="Zhou J."/>
            <person name="Ni P."/>
            <person name="Dong W."/>
            <person name="Hu S."/>
            <person name="Zeng C."/>
            <person name="Zhang J."/>
            <person name="Zhang Y."/>
            <person name="Li R."/>
            <person name="Xu Z."/>
            <person name="Li S."/>
            <person name="Li X."/>
            <person name="Zheng H."/>
            <person name="Cong L."/>
            <person name="Lin L."/>
            <person name="Yin J."/>
            <person name="Geng J."/>
            <person name="Li G."/>
            <person name="Shi J."/>
            <person name="Liu J."/>
            <person name="Lv H."/>
            <person name="Li J."/>
            <person name="Wang J."/>
            <person name="Deng Y."/>
            <person name="Ran L."/>
            <person name="Shi X."/>
            <person name="Wang X."/>
            <person name="Wu Q."/>
            <person name="Li C."/>
            <person name="Ren X."/>
            <person name="Wang J."/>
            <person name="Wang X."/>
            <person name="Li D."/>
            <person name="Liu D."/>
            <person name="Zhang X."/>
            <person name="Ji Z."/>
            <person name="Zhao W."/>
            <person name="Sun Y."/>
            <person name="Zhang Z."/>
            <person name="Bao J."/>
            <person name="Han Y."/>
            <person name="Dong L."/>
            <person name="Ji J."/>
            <person name="Chen P."/>
            <person name="Wu S."/>
            <person name="Liu J."/>
            <person name="Xiao Y."/>
            <person name="Bu D."/>
            <person name="Tan J."/>
            <person name="Yang L."/>
            <person name="Ye C."/>
            <person name="Zhang J."/>
            <person name="Xu J."/>
            <person name="Zhou Y."/>
            <person name="Yu Y."/>
            <person name="Zhang B."/>
            <person name="Zhuang S."/>
            <person name="Wei H."/>
            <person name="Liu B."/>
            <person name="Lei M."/>
            <person name="Yu H."/>
            <person name="Li Y."/>
            <person name="Xu H."/>
            <person name="Wei S."/>
            <person name="He X."/>
            <person name="Fang L."/>
            <person name="Zhang Z."/>
            <person name="Zhang Y."/>
            <person name="Huang X."/>
            <person name="Su Z."/>
            <person name="Tong W."/>
            <person name="Li J."/>
            <person name="Tong Z."/>
            <person name="Li S."/>
            <person name="Ye J."/>
            <person name="Wang L."/>
            <person name="Fang L."/>
            <person name="Lei T."/>
            <person name="Chen C.-S."/>
            <person name="Chen H.-C."/>
            <person name="Xu Z."/>
            <person name="Li H."/>
            <person name="Huang H."/>
            <person name="Zhang F."/>
            <person name="Xu H."/>
            <person name="Li N."/>
            <person name="Zhao C."/>
            <person name="Li S."/>
            <person name="Dong L."/>
            <person name="Huang Y."/>
            <person name="Li L."/>
            <person name="Xi Y."/>
            <person name="Qi Q."/>
            <person name="Li W."/>
            <person name="Zhang B."/>
            <person name="Hu W."/>
            <person name="Zhang Y."/>
            <person name="Tian X."/>
            <person name="Jiao Y."/>
            <person name="Liang X."/>
            <person name="Jin J."/>
            <person name="Gao L."/>
            <person name="Zheng W."/>
            <person name="Hao B."/>
            <person name="Liu S.-M."/>
            <person name="Wang W."/>
            <person name="Yuan L."/>
            <person name="Cao M."/>
            <person name="McDermott J."/>
            <person name="Samudrala R."/>
            <person name="Wang J."/>
            <person name="Wong G.K.-S."/>
            <person name="Yang H."/>
        </authorList>
    </citation>
    <scope>NUCLEOTIDE SEQUENCE [LARGE SCALE GENOMIC DNA]</scope>
    <source>
        <strain>cv. 93-11</strain>
    </source>
</reference>
<reference evidence="4" key="2">
    <citation type="submission" date="2003-07" db="UniProtKB">
        <title>Proteome analysis of rice panicle.</title>
        <authorList>
            <person name="Salekdeh G.H."/>
            <person name="Bennett J."/>
        </authorList>
    </citation>
    <scope>PROTEIN SEQUENCE OF 76-83 AND 106-119</scope>
    <source>
        <strain>cv. IR64</strain>
        <tissue evidence="4">Panicle</tissue>
    </source>
</reference>
<protein>
    <recommendedName>
        <fullName>Oxygen-evolving enhancer protein 3, chloroplastic</fullName>
        <shortName>OEE3</shortName>
    </recommendedName>
    <alternativeName>
        <fullName>LP02</fullName>
    </alternativeName>
</protein>
<comment type="subcellular location">
    <subcellularLocation>
        <location evidence="1">Plastid</location>
        <location evidence="1">Chloroplast thylakoid membrane</location>
    </subcellularLocation>
    <text evidence="1">Associated with the photosystem II complex.</text>
</comment>
<comment type="similarity">
    <text evidence="4">Belongs to the PsbQ family.</text>
</comment>
<comment type="sequence caution" evidence="4">
    <conflict type="erroneous initiation">
        <sequence resource="EMBL-CDS" id="EAZ04233"/>
    </conflict>
</comment>
<proteinExistence type="evidence at protein level"/>
<feature type="transit peptide" description="Chloroplast" evidence="2">
    <location>
        <begin position="1"/>
        <end position="63"/>
    </location>
</feature>
<feature type="chain" id="PRO_0000100362" description="Oxygen-evolving enhancer protein 3, chloroplastic">
    <location>
        <begin position="64"/>
        <end position="217"/>
    </location>
</feature>
<feature type="region of interest" description="Disordered" evidence="3">
    <location>
        <begin position="1"/>
        <end position="25"/>
    </location>
</feature>
<feature type="region of interest" description="Disordered" evidence="3">
    <location>
        <begin position="73"/>
        <end position="95"/>
    </location>
</feature>
<feature type="sequence conflict" description="In Ref. 2; AA sequence." evidence="4" ref="2">
    <original>P</original>
    <variation>Q</variation>
    <location>
        <position position="82"/>
    </location>
</feature>
<dbReference type="EMBL" id="CM000132">
    <property type="protein sequence ID" value="EAZ04233.1"/>
    <property type="status" value="ALT_INIT"/>
    <property type="molecule type" value="Genomic_DNA"/>
</dbReference>
<dbReference type="SMR" id="P83646"/>
<dbReference type="STRING" id="39946.P83646"/>
<dbReference type="HOGENOM" id="CLU_085524_0_0_1"/>
<dbReference type="Proteomes" id="UP000007015">
    <property type="component" value="Chromosome 7"/>
</dbReference>
<dbReference type="GO" id="GO:0009535">
    <property type="term" value="C:chloroplast thylakoid membrane"/>
    <property type="evidence" value="ECO:0007669"/>
    <property type="project" value="UniProtKB-SubCell"/>
</dbReference>
<dbReference type="GO" id="GO:0019898">
    <property type="term" value="C:extrinsic component of membrane"/>
    <property type="evidence" value="ECO:0007669"/>
    <property type="project" value="InterPro"/>
</dbReference>
<dbReference type="GO" id="GO:0009654">
    <property type="term" value="C:photosystem II oxygen evolving complex"/>
    <property type="evidence" value="ECO:0007669"/>
    <property type="project" value="InterPro"/>
</dbReference>
<dbReference type="GO" id="GO:0009536">
    <property type="term" value="C:plastid"/>
    <property type="evidence" value="ECO:0000305"/>
    <property type="project" value="Gramene"/>
</dbReference>
<dbReference type="GO" id="GO:0005509">
    <property type="term" value="F:calcium ion binding"/>
    <property type="evidence" value="ECO:0007669"/>
    <property type="project" value="InterPro"/>
</dbReference>
<dbReference type="GO" id="GO:0045156">
    <property type="term" value="F:electron transporter, transferring electrons within the cyclic electron transport pathway of photosynthesis activity"/>
    <property type="evidence" value="ECO:0007669"/>
    <property type="project" value="TreeGrafter"/>
</dbReference>
<dbReference type="GO" id="GO:0009767">
    <property type="term" value="P:photosynthetic electron transport chain"/>
    <property type="evidence" value="ECO:0007669"/>
    <property type="project" value="TreeGrafter"/>
</dbReference>
<dbReference type="FunFam" id="1.20.120.290:FF:000001">
    <property type="entry name" value="Oxygen-evolving enhancer protein 3"/>
    <property type="match status" value="1"/>
</dbReference>
<dbReference type="Gene3D" id="1.20.120.290">
    <property type="entry name" value="Oxygen-evolving enhancer protein 3 (PsbQ), four-helix up-down bundle"/>
    <property type="match status" value="1"/>
</dbReference>
<dbReference type="InterPro" id="IPR023222">
    <property type="entry name" value="PsbQ-like_dom_sf"/>
</dbReference>
<dbReference type="InterPro" id="IPR008797">
    <property type="entry name" value="PSII_PsbQ"/>
</dbReference>
<dbReference type="InterPro" id="IPR054099">
    <property type="entry name" value="PSII_PsbQ_pln"/>
</dbReference>
<dbReference type="PANTHER" id="PTHR33399">
    <property type="entry name" value="OXYGEN-EVOLVING ENHANCER PROTEIN 3-1, CHLOROPLASTIC"/>
    <property type="match status" value="1"/>
</dbReference>
<dbReference type="PANTHER" id="PTHR33399:SF3">
    <property type="entry name" value="OXYGEN-EVOLVING ENHANCER PROTEIN 3-1, CHLOROPLASTIC"/>
    <property type="match status" value="1"/>
</dbReference>
<dbReference type="Pfam" id="PF05757">
    <property type="entry name" value="PsbQ"/>
    <property type="match status" value="1"/>
</dbReference>
<dbReference type="SUPFAM" id="SSF101112">
    <property type="entry name" value="Oxygen-evolving enhancer protein 3"/>
    <property type="match status" value="1"/>
</dbReference>
<organism>
    <name type="scientific">Oryza sativa subsp. indica</name>
    <name type="common">Rice</name>
    <dbReference type="NCBI Taxonomy" id="39946"/>
    <lineage>
        <taxon>Eukaryota</taxon>
        <taxon>Viridiplantae</taxon>
        <taxon>Streptophyta</taxon>
        <taxon>Embryophyta</taxon>
        <taxon>Tracheophyta</taxon>
        <taxon>Spermatophyta</taxon>
        <taxon>Magnoliopsida</taxon>
        <taxon>Liliopsida</taxon>
        <taxon>Poales</taxon>
        <taxon>Poaceae</taxon>
        <taxon>BOP clade</taxon>
        <taxon>Oryzoideae</taxon>
        <taxon>Oryzeae</taxon>
        <taxon>Oryzinae</taxon>
        <taxon>Oryza</taxon>
        <taxon>Oryza sativa</taxon>
    </lineage>
</organism>
<name>PSBQ_ORYSI</name>
<keyword id="KW-0150">Chloroplast</keyword>
<keyword id="KW-0903">Direct protein sequencing</keyword>
<keyword id="KW-0472">Membrane</keyword>
<keyword id="KW-0602">Photosynthesis</keyword>
<keyword id="KW-0604">Photosystem II</keyword>
<keyword id="KW-0934">Plastid</keyword>
<keyword id="KW-1185">Reference proteome</keyword>
<keyword id="KW-0793">Thylakoid</keyword>
<keyword id="KW-0809">Transit peptide</keyword>
<accession>P83646</accession>
<accession>A2YMC2</accession>
<evidence type="ECO:0000250" key="1"/>
<evidence type="ECO:0000255" key="2"/>
<evidence type="ECO:0000256" key="3">
    <source>
        <dbReference type="SAM" id="MobiDB-lite"/>
    </source>
</evidence>
<evidence type="ECO:0000305" key="4"/>